<comment type="function">
    <text evidence="7">Disaccharide-specific acuminosidase, hydrolyzes the beta-glycosidic bond between p-allylphenol and acuminose with retention of anomeric configuration. Has highest activity towards furcatin, and lower activity towards beta-primeverosides and beta-vicianoside. Has very low activity towards beta-gentobiosides.</text>
</comment>
<comment type="catalytic activity">
    <reaction evidence="7">
        <text>7-[beta-D-apiofuranosyl-(1-&gt;6)-beta-D-glucopyranosyloxy]isoflavonoid + H2O = a 7-hydroxyisoflavonoid + beta-D-apiofuranosyl-(1-&gt;6)-D-glucose.</text>
        <dbReference type="EC" id="3.2.1.161"/>
    </reaction>
</comment>
<comment type="biophysicochemical properties">
    <kinetics>
        <KM evidence="7">2.2 mM for furcatin</KM>
        <KM evidence="7">5.1 mM for pNP beta-primeveroside</KM>
    </kinetics>
    <phDependence>
        <text evidence="7">Optimum pH is 5.0. Active between pH 4.0 and 10.0.</text>
    </phDependence>
    <temperatureDependence>
        <text evidence="7">Optimum temperature is 40 degrees Celsius. Stable below 50 degrees Celsius.</text>
    </temperatureDependence>
</comment>
<comment type="subcellular location">
    <subcellularLocation>
        <location evidence="7">Plastid</location>
        <location evidence="7">Chloroplast</location>
    </subcellularLocation>
</comment>
<comment type="tissue specificity">
    <text evidence="7">Expressed in young and mature leaves, but not in fruit and stem.</text>
</comment>
<comment type="similarity">
    <text evidence="5">Belongs to the glycosyl hydrolase 1 family.</text>
</comment>
<accession>Q75W17</accession>
<protein>
    <recommendedName>
        <fullName evidence="8 10">Furcatin hydrolase</fullName>
        <shortName evidence="8">FH</shortName>
        <ecNumber evidence="7">3.2.1.161</ecNumber>
    </recommendedName>
</protein>
<sequence length="538" mass="60626">MATITTLASSVPLFRPYSFPGGSSRKPKKDNLSIKPPATSSLKVNAKLASADDTSSNFNKDNWLASADELSRSFPPGFLFGGGSASYQYEGAVKEGGRTPSIWDTFAHEFPDKIADGSNGDVAVDFYHRYKDDVKLMKKIGVNGFRFSISWTRILPSGKLCGGVNKEGVAFYNSLINELLANGIEPFVTIFHWDLPQGLENEYDGFLSGQIVNDYRDYAEVCFQEFGDRVKFWTTLNEPWTFCYNGYVNGSFAPGRCSTCTAGNSGTEPYLVAHNLLLSHAAVAQLYKNKYQASQKGQIGIVLVCFWMVPYSDCPYDCEAAQRALDFMLGWFLHPLTYGDYPESMRHLVGERLPQFTEMQAMMMKGSIDFLGLNYYTSIYAANNESPNPHDISYTTDSRVNLFQKRDGILIGPATGTPAFCFCPEGIRDLLVYTKEKYNNPIIYITECGLAEANINTVDQGVKDVERVEFYYEHLKFLRSAIKKGVNVKGFFTWSLLDDWEWNSGFNVRFGIVYIDHEDGLKRYLKYSALWFKKLFGK</sequence>
<name>FURH_VIBFR</name>
<proteinExistence type="evidence at protein level"/>
<reference evidence="9 10" key="1">
    <citation type="journal article" date="2004" name="J. Biol. Chem.">
        <title>Furcatin hydrolase from Viburnum furcatum Blume is a novel disaccharide-specific acuminosidase in glycosyl hydrolase family 1.</title>
        <authorList>
            <person name="Ahn Y.O."/>
            <person name="Mizutani M."/>
            <person name="Saino H."/>
            <person name="Sakata K."/>
        </authorList>
    </citation>
    <scope>NUCLEOTIDE SEQUENCE [MRNA]</scope>
    <scope>FUNCTION</scope>
    <scope>CATALYTIC ACTIVITY</scope>
    <scope>BIOPHYSICOCHEMICAL PROPERTIES</scope>
    <scope>SUBCELLULAR LOCATION</scope>
    <scope>TISSUE SPECIFICITY</scope>
    <source>
        <tissue evidence="7">Leaf</tissue>
    </source>
</reference>
<evidence type="ECO:0000250" key="1">
    <source>
        <dbReference type="UniProtKB" id="Q1XH05"/>
    </source>
</evidence>
<evidence type="ECO:0000250" key="2">
    <source>
        <dbReference type="UniProtKB" id="Q7XSK0"/>
    </source>
</evidence>
<evidence type="ECO:0000250" key="3">
    <source>
        <dbReference type="UniProtKB" id="Q8L7J2"/>
    </source>
</evidence>
<evidence type="ECO:0000250" key="4">
    <source>
        <dbReference type="UniProtKB" id="Q9SPP9"/>
    </source>
</evidence>
<evidence type="ECO:0000255" key="5"/>
<evidence type="ECO:0000256" key="6">
    <source>
        <dbReference type="SAM" id="MobiDB-lite"/>
    </source>
</evidence>
<evidence type="ECO:0000269" key="7">
    <source>
    </source>
</evidence>
<evidence type="ECO:0000303" key="8">
    <source>
    </source>
</evidence>
<evidence type="ECO:0000305" key="9"/>
<evidence type="ECO:0000312" key="10">
    <source>
        <dbReference type="EMBL" id="BAD14925.1"/>
    </source>
</evidence>
<keyword id="KW-0150">Chloroplast</keyword>
<keyword id="KW-1015">Disulfide bond</keyword>
<keyword id="KW-0326">Glycosidase</keyword>
<keyword id="KW-0378">Hydrolase</keyword>
<keyword id="KW-0934">Plastid</keyword>
<keyword id="KW-0809">Transit peptide</keyword>
<feature type="transit peptide" description="Chloroplast" evidence="5">
    <location>
        <begin position="1"/>
        <end position="66"/>
    </location>
</feature>
<feature type="chain" id="PRO_0000398616" description="Furcatin hydrolase" evidence="5">
    <location>
        <begin position="67"/>
        <end position="538"/>
    </location>
</feature>
<feature type="region of interest" description="Disordered" evidence="6">
    <location>
        <begin position="18"/>
        <end position="37"/>
    </location>
</feature>
<feature type="active site" description="Proton donor" evidence="3">
    <location>
        <position position="238"/>
    </location>
</feature>
<feature type="active site" description="Nucleophile" evidence="3">
    <location>
        <position position="447"/>
    </location>
</feature>
<feature type="binding site" evidence="2">
    <location>
        <position position="88"/>
    </location>
    <ligand>
        <name>a beta-D-glucoside</name>
        <dbReference type="ChEBI" id="CHEBI:22798"/>
    </ligand>
</feature>
<feature type="binding site" evidence="2">
    <location>
        <position position="192"/>
    </location>
    <ligand>
        <name>a beta-D-glucoside</name>
        <dbReference type="ChEBI" id="CHEBI:22798"/>
    </ligand>
</feature>
<feature type="binding site" evidence="2">
    <location>
        <begin position="237"/>
        <end position="238"/>
    </location>
    <ligand>
        <name>a beta-D-glucoside</name>
        <dbReference type="ChEBI" id="CHEBI:22798"/>
    </ligand>
</feature>
<feature type="binding site" evidence="2">
    <location>
        <position position="376"/>
    </location>
    <ligand>
        <name>a beta-D-glucoside</name>
        <dbReference type="ChEBI" id="CHEBI:22798"/>
    </ligand>
</feature>
<feature type="binding site" evidence="4">
    <location>
        <position position="447"/>
    </location>
    <ligand>
        <name>a beta-D-glucoside</name>
        <dbReference type="ChEBI" id="CHEBI:22798"/>
    </ligand>
</feature>
<feature type="binding site" evidence="2">
    <location>
        <position position="494"/>
    </location>
    <ligand>
        <name>a beta-D-glucoside</name>
        <dbReference type="ChEBI" id="CHEBI:22798"/>
    </ligand>
</feature>
<feature type="binding site" evidence="2">
    <location>
        <begin position="501"/>
        <end position="502"/>
    </location>
    <ligand>
        <name>a beta-D-glucoside</name>
        <dbReference type="ChEBI" id="CHEBI:22798"/>
    </ligand>
</feature>
<feature type="binding site" evidence="1">
    <location>
        <position position="510"/>
    </location>
    <ligand>
        <name>a beta-D-glucoside</name>
        <dbReference type="ChEBI" id="CHEBI:22798"/>
    </ligand>
</feature>
<feature type="disulfide bond" evidence="3">
    <location>
        <begin position="257"/>
        <end position="260"/>
    </location>
</feature>
<dbReference type="EC" id="3.2.1.161" evidence="7"/>
<dbReference type="EMBL" id="AB122081">
    <property type="protein sequence ID" value="BAD14925.1"/>
    <property type="molecule type" value="mRNA"/>
</dbReference>
<dbReference type="SMR" id="Q75W17"/>
<dbReference type="CAZy" id="GH1">
    <property type="family name" value="Glycoside Hydrolase Family 1"/>
</dbReference>
<dbReference type="KEGG" id="ag:BAD14925"/>
<dbReference type="BioCyc" id="MetaCyc:MONOMER-17662"/>
<dbReference type="BRENDA" id="3.2.1.161">
    <property type="organism ID" value="8017"/>
</dbReference>
<dbReference type="GO" id="GO:0009507">
    <property type="term" value="C:chloroplast"/>
    <property type="evidence" value="ECO:0007669"/>
    <property type="project" value="UniProtKB-SubCell"/>
</dbReference>
<dbReference type="GO" id="GO:0033956">
    <property type="term" value="F:beta-apiosyl-beta-glucosidase activity"/>
    <property type="evidence" value="ECO:0007669"/>
    <property type="project" value="UniProtKB-EC"/>
</dbReference>
<dbReference type="GO" id="GO:0005975">
    <property type="term" value="P:carbohydrate metabolic process"/>
    <property type="evidence" value="ECO:0007669"/>
    <property type="project" value="InterPro"/>
</dbReference>
<dbReference type="FunFam" id="3.20.20.80:FF:000020">
    <property type="entry name" value="Beta-glucosidase 12"/>
    <property type="match status" value="1"/>
</dbReference>
<dbReference type="Gene3D" id="3.20.20.80">
    <property type="entry name" value="Glycosidases"/>
    <property type="match status" value="1"/>
</dbReference>
<dbReference type="InterPro" id="IPR001360">
    <property type="entry name" value="Glyco_hydro_1"/>
</dbReference>
<dbReference type="InterPro" id="IPR033132">
    <property type="entry name" value="Glyco_hydro_1_N_CS"/>
</dbReference>
<dbReference type="InterPro" id="IPR017853">
    <property type="entry name" value="Glycoside_hydrolase_SF"/>
</dbReference>
<dbReference type="PANTHER" id="PTHR10353:SF318">
    <property type="entry name" value="BETA-GLUCOSIDASE 31-RELATED"/>
    <property type="match status" value="1"/>
</dbReference>
<dbReference type="PANTHER" id="PTHR10353">
    <property type="entry name" value="GLYCOSYL HYDROLASE"/>
    <property type="match status" value="1"/>
</dbReference>
<dbReference type="Pfam" id="PF00232">
    <property type="entry name" value="Glyco_hydro_1"/>
    <property type="match status" value="1"/>
</dbReference>
<dbReference type="PRINTS" id="PR00131">
    <property type="entry name" value="GLHYDRLASE1"/>
</dbReference>
<dbReference type="SUPFAM" id="SSF51445">
    <property type="entry name" value="(Trans)glycosidases"/>
    <property type="match status" value="1"/>
</dbReference>
<dbReference type="PROSITE" id="PS00653">
    <property type="entry name" value="GLYCOSYL_HYDROL_F1_2"/>
    <property type="match status" value="1"/>
</dbReference>
<organism>
    <name type="scientific">Viburnum furcatum</name>
    <name type="common">Scarlet leaved viburnum</name>
    <dbReference type="NCBI Taxonomy" id="237940"/>
    <lineage>
        <taxon>Eukaryota</taxon>
        <taxon>Viridiplantae</taxon>
        <taxon>Streptophyta</taxon>
        <taxon>Embryophyta</taxon>
        <taxon>Tracheophyta</taxon>
        <taxon>Spermatophyta</taxon>
        <taxon>Magnoliopsida</taxon>
        <taxon>eudicotyledons</taxon>
        <taxon>Gunneridae</taxon>
        <taxon>Pentapetalae</taxon>
        <taxon>asterids</taxon>
        <taxon>campanulids</taxon>
        <taxon>Dipsacales</taxon>
        <taxon>Adoxaceae</taxon>
        <taxon>Viburnum</taxon>
    </lineage>
</organism>